<dbReference type="EC" id="3.6.4.13"/>
<dbReference type="EMBL" id="AK097078">
    <property type="protein sequence ID" value="BAC04942.1"/>
    <property type="molecule type" value="mRNA"/>
</dbReference>
<dbReference type="EMBL" id="AC138466">
    <property type="status" value="NOT_ANNOTATED_CDS"/>
    <property type="molecule type" value="Genomic_DNA"/>
</dbReference>
<dbReference type="EMBL" id="BC012461">
    <property type="protein sequence ID" value="AAH12461.2"/>
    <property type="molecule type" value="mRNA"/>
</dbReference>
<dbReference type="EMBL" id="BC040185">
    <property type="protein sequence ID" value="AAH40185.1"/>
    <property type="molecule type" value="mRNA"/>
</dbReference>
<dbReference type="EMBL" id="CR936870">
    <property type="protein sequence ID" value="CAI59782.1"/>
    <property type="molecule type" value="Transcribed_RNA"/>
</dbReference>
<dbReference type="CCDS" id="CCDS41865.1"/>
<dbReference type="RefSeq" id="NP_778236.2">
    <property type="nucleotide sequence ID" value="NM_175066.4"/>
</dbReference>
<dbReference type="SMR" id="Q8N8A6"/>
<dbReference type="BioGRID" id="130475">
    <property type="interactions" value="132"/>
</dbReference>
<dbReference type="FunCoup" id="Q8N8A6">
    <property type="interactions" value="3847"/>
</dbReference>
<dbReference type="IntAct" id="Q8N8A6">
    <property type="interactions" value="78"/>
</dbReference>
<dbReference type="MINT" id="Q8N8A6"/>
<dbReference type="STRING" id="9606.ENSP00000380495"/>
<dbReference type="GlyGen" id="Q8N8A6">
    <property type="glycosylation" value="1 site"/>
</dbReference>
<dbReference type="iPTMnet" id="Q8N8A6"/>
<dbReference type="MetOSite" id="Q8N8A6"/>
<dbReference type="PhosphoSitePlus" id="Q8N8A6"/>
<dbReference type="SwissPalm" id="Q8N8A6"/>
<dbReference type="BioMuta" id="DDX51"/>
<dbReference type="DMDM" id="229462978"/>
<dbReference type="jPOST" id="Q8N8A6"/>
<dbReference type="MassIVE" id="Q8N8A6"/>
<dbReference type="PaxDb" id="9606-ENSP00000380495"/>
<dbReference type="PeptideAtlas" id="Q8N8A6"/>
<dbReference type="ProteomicsDB" id="72392"/>
<dbReference type="Pumba" id="Q8N8A6"/>
<dbReference type="Antibodypedia" id="32048">
    <property type="antibodies" value="119 antibodies from 24 providers"/>
</dbReference>
<dbReference type="DNASU" id="317781"/>
<dbReference type="Ensembl" id="ENST00000397333.4">
    <property type="protein sequence ID" value="ENSP00000380495.3"/>
    <property type="gene ID" value="ENSG00000185163.10"/>
</dbReference>
<dbReference type="Ensembl" id="ENST00000673535.1">
    <property type="protein sequence ID" value="ENSP00000500171.1"/>
    <property type="gene ID" value="ENSG00000288503.1"/>
</dbReference>
<dbReference type="GeneID" id="317781"/>
<dbReference type="KEGG" id="hsa:317781"/>
<dbReference type="MANE-Select" id="ENST00000397333.4">
    <property type="protein sequence ID" value="ENSP00000380495.3"/>
    <property type="RefSeq nucleotide sequence ID" value="NM_175066.4"/>
    <property type="RefSeq protein sequence ID" value="NP_778236.2"/>
</dbReference>
<dbReference type="UCSC" id="uc001ujy.5">
    <property type="organism name" value="human"/>
</dbReference>
<dbReference type="AGR" id="HGNC:20082"/>
<dbReference type="CTD" id="317781"/>
<dbReference type="DisGeNET" id="317781"/>
<dbReference type="GeneCards" id="DDX51"/>
<dbReference type="HGNC" id="HGNC:20082">
    <property type="gene designation" value="DDX51"/>
</dbReference>
<dbReference type="HPA" id="ENSG00000185163">
    <property type="expression patterns" value="Low tissue specificity"/>
</dbReference>
<dbReference type="neXtProt" id="NX_Q8N8A6"/>
<dbReference type="OpenTargets" id="ENSG00000185163"/>
<dbReference type="PharmGKB" id="PA134974036"/>
<dbReference type="VEuPathDB" id="HostDB:ENSG00000185163"/>
<dbReference type="eggNOG" id="KOG0350">
    <property type="taxonomic scope" value="Eukaryota"/>
</dbReference>
<dbReference type="GeneTree" id="ENSGT00550000075141"/>
<dbReference type="HOGENOM" id="CLU_003041_15_3_1"/>
<dbReference type="InParanoid" id="Q8N8A6"/>
<dbReference type="OMA" id="HEVKAFD"/>
<dbReference type="OrthoDB" id="3370at2759"/>
<dbReference type="PAN-GO" id="Q8N8A6">
    <property type="GO annotations" value="1 GO annotation based on evolutionary models"/>
</dbReference>
<dbReference type="PhylomeDB" id="Q8N8A6"/>
<dbReference type="TreeFam" id="TF314505"/>
<dbReference type="PathwayCommons" id="Q8N8A6"/>
<dbReference type="SignaLink" id="Q8N8A6"/>
<dbReference type="BioGRID-ORCS" id="317781">
    <property type="hits" value="636 hits in 1166 CRISPR screens"/>
</dbReference>
<dbReference type="CD-CODE" id="91857CE7">
    <property type="entry name" value="Nucleolus"/>
</dbReference>
<dbReference type="ChiTaRS" id="DDX51">
    <property type="organism name" value="human"/>
</dbReference>
<dbReference type="GenomeRNAi" id="317781"/>
<dbReference type="Pharos" id="Q8N8A6">
    <property type="development level" value="Tdark"/>
</dbReference>
<dbReference type="PRO" id="PR:Q8N8A6"/>
<dbReference type="Proteomes" id="UP000005640">
    <property type="component" value="Chromosome 12"/>
</dbReference>
<dbReference type="RNAct" id="Q8N8A6">
    <property type="molecule type" value="protein"/>
</dbReference>
<dbReference type="Bgee" id="ENSG00000185163">
    <property type="expression patterns" value="Expressed in right hemisphere of cerebellum and 96 other cell types or tissues"/>
</dbReference>
<dbReference type="GO" id="GO:0016020">
    <property type="term" value="C:membrane"/>
    <property type="evidence" value="ECO:0007005"/>
    <property type="project" value="UniProtKB"/>
</dbReference>
<dbReference type="GO" id="GO:0005730">
    <property type="term" value="C:nucleolus"/>
    <property type="evidence" value="ECO:0007669"/>
    <property type="project" value="UniProtKB-SubCell"/>
</dbReference>
<dbReference type="GO" id="GO:0005634">
    <property type="term" value="C:nucleus"/>
    <property type="evidence" value="ECO:0000318"/>
    <property type="project" value="GO_Central"/>
</dbReference>
<dbReference type="GO" id="GO:0005524">
    <property type="term" value="F:ATP binding"/>
    <property type="evidence" value="ECO:0007669"/>
    <property type="project" value="UniProtKB-KW"/>
</dbReference>
<dbReference type="GO" id="GO:0016887">
    <property type="term" value="F:ATP hydrolysis activity"/>
    <property type="evidence" value="ECO:0007669"/>
    <property type="project" value="RHEA"/>
</dbReference>
<dbReference type="GO" id="GO:0003723">
    <property type="term" value="F:RNA binding"/>
    <property type="evidence" value="ECO:0007005"/>
    <property type="project" value="UniProtKB"/>
</dbReference>
<dbReference type="GO" id="GO:0003724">
    <property type="term" value="F:RNA helicase activity"/>
    <property type="evidence" value="ECO:0007669"/>
    <property type="project" value="UniProtKB-EC"/>
</dbReference>
<dbReference type="GO" id="GO:0006364">
    <property type="term" value="P:rRNA processing"/>
    <property type="evidence" value="ECO:0007669"/>
    <property type="project" value="UniProtKB-KW"/>
</dbReference>
<dbReference type="CDD" id="cd17956">
    <property type="entry name" value="DEADc_DDX51"/>
    <property type="match status" value="1"/>
</dbReference>
<dbReference type="CDD" id="cd18787">
    <property type="entry name" value="SF2_C_DEAD"/>
    <property type="match status" value="1"/>
</dbReference>
<dbReference type="FunFam" id="3.40.50.300:FF:001539">
    <property type="entry name" value="ATP-dependent RNA helicase DDX51"/>
    <property type="match status" value="1"/>
</dbReference>
<dbReference type="FunFam" id="3.40.50.300:FF:002026">
    <property type="entry name" value="DEAD-box helicase 51"/>
    <property type="match status" value="1"/>
</dbReference>
<dbReference type="Gene3D" id="3.40.50.300">
    <property type="entry name" value="P-loop containing nucleotide triphosphate hydrolases"/>
    <property type="match status" value="2"/>
</dbReference>
<dbReference type="InterPro" id="IPR011545">
    <property type="entry name" value="DEAD/DEAH_box_helicase_dom"/>
</dbReference>
<dbReference type="InterPro" id="IPR014001">
    <property type="entry name" value="Helicase_ATP-bd"/>
</dbReference>
<dbReference type="InterPro" id="IPR001650">
    <property type="entry name" value="Helicase_C-like"/>
</dbReference>
<dbReference type="InterPro" id="IPR027417">
    <property type="entry name" value="P-loop_NTPase"/>
</dbReference>
<dbReference type="InterPro" id="IPR000629">
    <property type="entry name" value="RNA-helicase_DEAD-box_CS"/>
</dbReference>
<dbReference type="PANTHER" id="PTHR24031">
    <property type="entry name" value="RNA HELICASE"/>
    <property type="match status" value="1"/>
</dbReference>
<dbReference type="Pfam" id="PF00270">
    <property type="entry name" value="DEAD"/>
    <property type="match status" value="1"/>
</dbReference>
<dbReference type="Pfam" id="PF00271">
    <property type="entry name" value="Helicase_C"/>
    <property type="match status" value="1"/>
</dbReference>
<dbReference type="SMART" id="SM00487">
    <property type="entry name" value="DEXDc"/>
    <property type="match status" value="1"/>
</dbReference>
<dbReference type="SMART" id="SM00490">
    <property type="entry name" value="HELICc"/>
    <property type="match status" value="1"/>
</dbReference>
<dbReference type="SUPFAM" id="SSF52540">
    <property type="entry name" value="P-loop containing nucleoside triphosphate hydrolases"/>
    <property type="match status" value="1"/>
</dbReference>
<dbReference type="PROSITE" id="PS00039">
    <property type="entry name" value="DEAD_ATP_HELICASE"/>
    <property type="match status" value="1"/>
</dbReference>
<dbReference type="PROSITE" id="PS51192">
    <property type="entry name" value="HELICASE_ATP_BIND_1"/>
    <property type="match status" value="1"/>
</dbReference>
<dbReference type="PROSITE" id="PS51194">
    <property type="entry name" value="HELICASE_CTER"/>
    <property type="match status" value="1"/>
</dbReference>
<gene>
    <name type="primary">DDX51</name>
</gene>
<name>DDX51_HUMAN</name>
<feature type="initiator methionine" description="Removed" evidence="14">
    <location>
        <position position="1"/>
    </location>
</feature>
<feature type="chain" id="PRO_0000228096" description="ATP-dependent RNA helicase DDX51">
    <location>
        <begin position="2"/>
        <end position="666"/>
    </location>
</feature>
<feature type="domain" description="Helicase ATP-binding" evidence="2">
    <location>
        <begin position="243"/>
        <end position="452"/>
    </location>
</feature>
<feature type="domain" description="Helicase C-terminal" evidence="3">
    <location>
        <begin position="494"/>
        <end position="640"/>
    </location>
</feature>
<feature type="region of interest" description="Disordered" evidence="4">
    <location>
        <begin position="9"/>
        <end position="152"/>
    </location>
</feature>
<feature type="short sequence motif" description="Q motif">
    <location>
        <begin position="221"/>
        <end position="229"/>
    </location>
</feature>
<feature type="short sequence motif" description="DEAD box">
    <location>
        <begin position="371"/>
        <end position="374"/>
    </location>
</feature>
<feature type="compositionally biased region" description="Low complexity" evidence="4">
    <location>
        <begin position="10"/>
        <end position="28"/>
    </location>
</feature>
<feature type="compositionally biased region" description="Basic and acidic residues" evidence="4">
    <location>
        <begin position="33"/>
        <end position="48"/>
    </location>
</feature>
<feature type="compositionally biased region" description="Low complexity" evidence="4">
    <location>
        <begin position="49"/>
        <end position="58"/>
    </location>
</feature>
<feature type="compositionally biased region" description="Basic residues" evidence="4">
    <location>
        <begin position="65"/>
        <end position="75"/>
    </location>
</feature>
<feature type="compositionally biased region" description="Acidic residues" evidence="4">
    <location>
        <begin position="97"/>
        <end position="108"/>
    </location>
</feature>
<feature type="binding site" evidence="2">
    <location>
        <begin position="256"/>
        <end position="263"/>
    </location>
    <ligand>
        <name>ATP</name>
        <dbReference type="ChEBI" id="CHEBI:30616"/>
    </ligand>
</feature>
<feature type="modified residue" description="N-acetylalanine" evidence="14">
    <location>
        <position position="2"/>
    </location>
</feature>
<feature type="modified residue" description="Phosphoserine" evidence="8 10 11 12 13 15 16">
    <location>
        <position position="83"/>
    </location>
</feature>
<feature type="modified residue" description="Phosphoserine" evidence="9">
    <location>
        <position position="103"/>
    </location>
</feature>
<feature type="sequence variant" id="VAR_055299" description="In dbSNP:rs17857214." evidence="6">
    <original>R</original>
    <variation>Q</variation>
    <location>
        <position position="41"/>
    </location>
</feature>
<feature type="sequence variant" id="VAR_055300" description="In dbSNP:rs17855642." evidence="6">
    <original>E</original>
    <variation>V</variation>
    <location>
        <position position="134"/>
    </location>
</feature>
<feature type="sequence variant" id="VAR_055301" description="In dbSNP:rs17855639." evidence="6">
    <original>Q</original>
    <variation>K</variation>
    <location>
        <position position="175"/>
    </location>
</feature>
<feature type="sequence variant" id="VAR_055302" description="In dbSNP:rs17857213." evidence="6">
    <original>P</original>
    <variation>L</variation>
    <location>
        <position position="249"/>
    </location>
</feature>
<feature type="sequence variant" id="VAR_055303" description="In dbSNP:rs1133690." evidence="6">
    <original>Q</original>
    <variation>R</variation>
    <location>
        <position position="295"/>
    </location>
</feature>
<feature type="sequence variant" id="VAR_061825" description="In dbSNP:rs60927391." evidence="5">
    <original>A</original>
    <variation>V</variation>
    <location>
        <position position="322"/>
    </location>
</feature>
<feature type="sequence variant" id="VAR_055304" description="In dbSNP:rs17853968." evidence="6">
    <original>Q</original>
    <variation>K</variation>
    <location>
        <position position="406"/>
    </location>
</feature>
<feature type="sequence variant" id="VAR_055305" description="In dbSNP:rs17853969." evidence="6">
    <original>Q</original>
    <variation>K</variation>
    <location>
        <position position="652"/>
    </location>
</feature>
<feature type="sequence conflict" description="In Ref. 3; AAH40185." evidence="7" ref="3">
    <original>PGE</original>
    <variation>QGG</variation>
    <location>
        <begin position="120"/>
        <end position="122"/>
    </location>
</feature>
<feature type="sequence conflict" description="In Ref. 4; CAI59782." evidence="7" ref="4">
    <original>R</original>
    <variation>RR</variation>
    <location>
        <position position="592"/>
    </location>
</feature>
<feature type="sequence conflict" description="In Ref. 4; CAI59782." evidence="7" ref="4">
    <original>F</original>
    <variation>L</variation>
    <location>
        <position position="617"/>
    </location>
</feature>
<feature type="sequence conflict" description="In Ref. 4; CAI59782." evidence="7" ref="4">
    <original>E</original>
    <variation>G</variation>
    <location>
        <position position="654"/>
    </location>
</feature>
<keyword id="KW-0007">Acetylation</keyword>
<keyword id="KW-0067">ATP-binding</keyword>
<keyword id="KW-0347">Helicase</keyword>
<keyword id="KW-0378">Hydrolase</keyword>
<keyword id="KW-0547">Nucleotide-binding</keyword>
<keyword id="KW-0539">Nucleus</keyword>
<keyword id="KW-0597">Phosphoprotein</keyword>
<keyword id="KW-1267">Proteomics identification</keyword>
<keyword id="KW-1185">Reference proteome</keyword>
<keyword id="KW-0690">Ribosome biogenesis</keyword>
<keyword id="KW-0694">RNA-binding</keyword>
<keyword id="KW-0698">rRNA processing</keyword>
<sequence>MALFYVARYPGPDAAAAAGPEGAEAGAHGRARALLERLQSRARERQQQREPAQTEAAASTEPATRRRRRPRRRRRVNDAEPGSPEAPQGKRRKADGEDAGAESNEEAPGEPSAGSSEEAPGEPSAGSSEEAPGERSTSASAEAAPDGPALEEAAGPLVPGLVLGGFGKRKAPKVQPFLPRWLAEPNCVRRNVTEDLVPIEDIPDVHPDLQKQLRAHGISSYFPVQAAVIPALLESAACGFLVGRGGYRPSDLCVSAPTGSGKTLAFVIPVVQALLSRVVCHIRALVVLPTKELAQQVSKVFNIYTDATPLRVSLVTGQKSLAKEQESLVQKTADGYRCLADIVVATPGRLVDHIDQTPGFSLQQLRFLIIDEADRMIDSMHQSWLPRVVAAAFQSEDPADPCALLQRRQAQAVTAASTCCPQMPLQKLLFSATLTQNPEKLQQLGLHQPRLFSTGLAHRGLEDTDGDGDSGKYAFPVGLTHHYVPCSLSSKPLVVLHLVLEMGFSRVLCFTNSRENSHRLFLLVQAFGGVDVAEFSSRYGPGQRRMILKQFEQGKIQLLISTDATARGIDVQGVELVVNYDAPQYLRTYVHRVGRTARAGKTGQAFTLLLKVQERRFLRMLTEAGAPELQRHELSSKLLQPLVPRYEEALSQLEESVKEERKQRAA</sequence>
<proteinExistence type="evidence at protein level"/>
<reference key="1">
    <citation type="journal article" date="2004" name="Nat. Genet.">
        <title>Complete sequencing and characterization of 21,243 full-length human cDNAs.</title>
        <authorList>
            <person name="Ota T."/>
            <person name="Suzuki Y."/>
            <person name="Nishikawa T."/>
            <person name="Otsuki T."/>
            <person name="Sugiyama T."/>
            <person name="Irie R."/>
            <person name="Wakamatsu A."/>
            <person name="Hayashi K."/>
            <person name="Sato H."/>
            <person name="Nagai K."/>
            <person name="Kimura K."/>
            <person name="Makita H."/>
            <person name="Sekine M."/>
            <person name="Obayashi M."/>
            <person name="Nishi T."/>
            <person name="Shibahara T."/>
            <person name="Tanaka T."/>
            <person name="Ishii S."/>
            <person name="Yamamoto J."/>
            <person name="Saito K."/>
            <person name="Kawai Y."/>
            <person name="Isono Y."/>
            <person name="Nakamura Y."/>
            <person name="Nagahari K."/>
            <person name="Murakami K."/>
            <person name="Yasuda T."/>
            <person name="Iwayanagi T."/>
            <person name="Wagatsuma M."/>
            <person name="Shiratori A."/>
            <person name="Sudo H."/>
            <person name="Hosoiri T."/>
            <person name="Kaku Y."/>
            <person name="Kodaira H."/>
            <person name="Kondo H."/>
            <person name="Sugawara M."/>
            <person name="Takahashi M."/>
            <person name="Kanda K."/>
            <person name="Yokoi T."/>
            <person name="Furuya T."/>
            <person name="Kikkawa E."/>
            <person name="Omura Y."/>
            <person name="Abe K."/>
            <person name="Kamihara K."/>
            <person name="Katsuta N."/>
            <person name="Sato K."/>
            <person name="Tanikawa M."/>
            <person name="Yamazaki M."/>
            <person name="Ninomiya K."/>
            <person name="Ishibashi T."/>
            <person name="Yamashita H."/>
            <person name="Murakawa K."/>
            <person name="Fujimori K."/>
            <person name="Tanai H."/>
            <person name="Kimata M."/>
            <person name="Watanabe M."/>
            <person name="Hiraoka S."/>
            <person name="Chiba Y."/>
            <person name="Ishida S."/>
            <person name="Ono Y."/>
            <person name="Takiguchi S."/>
            <person name="Watanabe S."/>
            <person name="Yosida M."/>
            <person name="Hotuta T."/>
            <person name="Kusano J."/>
            <person name="Kanehori K."/>
            <person name="Takahashi-Fujii A."/>
            <person name="Hara H."/>
            <person name="Tanase T.-O."/>
            <person name="Nomura Y."/>
            <person name="Togiya S."/>
            <person name="Komai F."/>
            <person name="Hara R."/>
            <person name="Takeuchi K."/>
            <person name="Arita M."/>
            <person name="Imose N."/>
            <person name="Musashino K."/>
            <person name="Yuuki H."/>
            <person name="Oshima A."/>
            <person name="Sasaki N."/>
            <person name="Aotsuka S."/>
            <person name="Yoshikawa Y."/>
            <person name="Matsunawa H."/>
            <person name="Ichihara T."/>
            <person name="Shiohata N."/>
            <person name="Sano S."/>
            <person name="Moriya S."/>
            <person name="Momiyama H."/>
            <person name="Satoh N."/>
            <person name="Takami S."/>
            <person name="Terashima Y."/>
            <person name="Suzuki O."/>
            <person name="Nakagawa S."/>
            <person name="Senoh A."/>
            <person name="Mizoguchi H."/>
            <person name="Goto Y."/>
            <person name="Shimizu F."/>
            <person name="Wakebe H."/>
            <person name="Hishigaki H."/>
            <person name="Watanabe T."/>
            <person name="Sugiyama A."/>
            <person name="Takemoto M."/>
            <person name="Kawakami B."/>
            <person name="Yamazaki M."/>
            <person name="Watanabe K."/>
            <person name="Kumagai A."/>
            <person name="Itakura S."/>
            <person name="Fukuzumi Y."/>
            <person name="Fujimori Y."/>
            <person name="Komiyama M."/>
            <person name="Tashiro H."/>
            <person name="Tanigami A."/>
            <person name="Fujiwara T."/>
            <person name="Ono T."/>
            <person name="Yamada K."/>
            <person name="Fujii Y."/>
            <person name="Ozaki K."/>
            <person name="Hirao M."/>
            <person name="Ohmori Y."/>
            <person name="Kawabata A."/>
            <person name="Hikiji T."/>
            <person name="Kobatake N."/>
            <person name="Inagaki H."/>
            <person name="Ikema Y."/>
            <person name="Okamoto S."/>
            <person name="Okitani R."/>
            <person name="Kawakami T."/>
            <person name="Noguchi S."/>
            <person name="Itoh T."/>
            <person name="Shigeta K."/>
            <person name="Senba T."/>
            <person name="Matsumura K."/>
            <person name="Nakajima Y."/>
            <person name="Mizuno T."/>
            <person name="Morinaga M."/>
            <person name="Sasaki M."/>
            <person name="Togashi T."/>
            <person name="Oyama M."/>
            <person name="Hata H."/>
            <person name="Watanabe M."/>
            <person name="Komatsu T."/>
            <person name="Mizushima-Sugano J."/>
            <person name="Satoh T."/>
            <person name="Shirai Y."/>
            <person name="Takahashi Y."/>
            <person name="Nakagawa K."/>
            <person name="Okumura K."/>
            <person name="Nagase T."/>
            <person name="Nomura N."/>
            <person name="Kikuchi H."/>
            <person name="Masuho Y."/>
            <person name="Yamashita R."/>
            <person name="Nakai K."/>
            <person name="Yada T."/>
            <person name="Nakamura Y."/>
            <person name="Ohara O."/>
            <person name="Isogai T."/>
            <person name="Sugano S."/>
        </authorList>
    </citation>
    <scope>NUCLEOTIDE SEQUENCE [LARGE SCALE MRNA]</scope>
    <scope>VARIANT VAL-322</scope>
    <source>
        <tissue>Small intestine</tissue>
    </source>
</reference>
<reference key="2">
    <citation type="journal article" date="2006" name="Nature">
        <title>The finished DNA sequence of human chromosome 12.</title>
        <authorList>
            <person name="Scherer S.E."/>
            <person name="Muzny D.M."/>
            <person name="Buhay C.J."/>
            <person name="Chen R."/>
            <person name="Cree A."/>
            <person name="Ding Y."/>
            <person name="Dugan-Rocha S."/>
            <person name="Gill R."/>
            <person name="Gunaratne P."/>
            <person name="Harris R.A."/>
            <person name="Hawes A.C."/>
            <person name="Hernandez J."/>
            <person name="Hodgson A.V."/>
            <person name="Hume J."/>
            <person name="Jackson A."/>
            <person name="Khan Z.M."/>
            <person name="Kovar-Smith C."/>
            <person name="Lewis L.R."/>
            <person name="Lozado R.J."/>
            <person name="Metzker M.L."/>
            <person name="Milosavljevic A."/>
            <person name="Miner G.R."/>
            <person name="Montgomery K.T."/>
            <person name="Morgan M.B."/>
            <person name="Nazareth L.V."/>
            <person name="Scott G."/>
            <person name="Sodergren E."/>
            <person name="Song X.-Z."/>
            <person name="Steffen D."/>
            <person name="Lovering R.C."/>
            <person name="Wheeler D.A."/>
            <person name="Worley K.C."/>
            <person name="Yuan Y."/>
            <person name="Zhang Z."/>
            <person name="Adams C.Q."/>
            <person name="Ansari-Lari M.A."/>
            <person name="Ayele M."/>
            <person name="Brown M.J."/>
            <person name="Chen G."/>
            <person name="Chen Z."/>
            <person name="Clerc-Blankenburg K.P."/>
            <person name="Davis C."/>
            <person name="Delgado O."/>
            <person name="Dinh H.H."/>
            <person name="Draper H."/>
            <person name="Gonzalez-Garay M.L."/>
            <person name="Havlak P."/>
            <person name="Jackson L.R."/>
            <person name="Jacob L.S."/>
            <person name="Kelly S.H."/>
            <person name="Li L."/>
            <person name="Li Z."/>
            <person name="Liu J."/>
            <person name="Liu W."/>
            <person name="Lu J."/>
            <person name="Maheshwari M."/>
            <person name="Nguyen B.-V."/>
            <person name="Okwuonu G.O."/>
            <person name="Pasternak S."/>
            <person name="Perez L.M."/>
            <person name="Plopper F.J.H."/>
            <person name="Santibanez J."/>
            <person name="Shen H."/>
            <person name="Tabor P.E."/>
            <person name="Verduzco D."/>
            <person name="Waldron L."/>
            <person name="Wang Q."/>
            <person name="Williams G.A."/>
            <person name="Zhang J."/>
            <person name="Zhou J."/>
            <person name="Allen C.C."/>
            <person name="Amin A.G."/>
            <person name="Anyalebechi V."/>
            <person name="Bailey M."/>
            <person name="Barbaria J.A."/>
            <person name="Bimage K.E."/>
            <person name="Bryant N.P."/>
            <person name="Burch P.E."/>
            <person name="Burkett C.E."/>
            <person name="Burrell K.L."/>
            <person name="Calderon E."/>
            <person name="Cardenas V."/>
            <person name="Carter K."/>
            <person name="Casias K."/>
            <person name="Cavazos I."/>
            <person name="Cavazos S.R."/>
            <person name="Ceasar H."/>
            <person name="Chacko J."/>
            <person name="Chan S.N."/>
            <person name="Chavez D."/>
            <person name="Christopoulos C."/>
            <person name="Chu J."/>
            <person name="Cockrell R."/>
            <person name="Cox C.D."/>
            <person name="Dang M."/>
            <person name="Dathorne S.R."/>
            <person name="David R."/>
            <person name="Davis C.M."/>
            <person name="Davy-Carroll L."/>
            <person name="Deshazo D.R."/>
            <person name="Donlin J.E."/>
            <person name="D'Souza L."/>
            <person name="Eaves K.A."/>
            <person name="Egan A."/>
            <person name="Emery-Cohen A.J."/>
            <person name="Escotto M."/>
            <person name="Flagg N."/>
            <person name="Forbes L.D."/>
            <person name="Gabisi A.M."/>
            <person name="Garza M."/>
            <person name="Hamilton C."/>
            <person name="Henderson N."/>
            <person name="Hernandez O."/>
            <person name="Hines S."/>
            <person name="Hogues M.E."/>
            <person name="Huang M."/>
            <person name="Idlebird D.G."/>
            <person name="Johnson R."/>
            <person name="Jolivet A."/>
            <person name="Jones S."/>
            <person name="Kagan R."/>
            <person name="King L.M."/>
            <person name="Leal B."/>
            <person name="Lebow H."/>
            <person name="Lee S."/>
            <person name="LeVan J.M."/>
            <person name="Lewis L.C."/>
            <person name="London P."/>
            <person name="Lorensuhewa L.M."/>
            <person name="Loulseged H."/>
            <person name="Lovett D.A."/>
            <person name="Lucier A."/>
            <person name="Lucier R.L."/>
            <person name="Ma J."/>
            <person name="Madu R.C."/>
            <person name="Mapua P."/>
            <person name="Martindale A.D."/>
            <person name="Martinez E."/>
            <person name="Massey E."/>
            <person name="Mawhiney S."/>
            <person name="Meador M.G."/>
            <person name="Mendez S."/>
            <person name="Mercado C."/>
            <person name="Mercado I.C."/>
            <person name="Merritt C.E."/>
            <person name="Miner Z.L."/>
            <person name="Minja E."/>
            <person name="Mitchell T."/>
            <person name="Mohabbat F."/>
            <person name="Mohabbat K."/>
            <person name="Montgomery B."/>
            <person name="Moore N."/>
            <person name="Morris S."/>
            <person name="Munidasa M."/>
            <person name="Ngo R.N."/>
            <person name="Nguyen N.B."/>
            <person name="Nickerson E."/>
            <person name="Nwaokelemeh O.O."/>
            <person name="Nwokenkwo S."/>
            <person name="Obregon M."/>
            <person name="Oguh M."/>
            <person name="Oragunye N."/>
            <person name="Oviedo R.J."/>
            <person name="Parish B.J."/>
            <person name="Parker D.N."/>
            <person name="Parrish J."/>
            <person name="Parks K.L."/>
            <person name="Paul H.A."/>
            <person name="Payton B.A."/>
            <person name="Perez A."/>
            <person name="Perrin W."/>
            <person name="Pickens A."/>
            <person name="Primus E.L."/>
            <person name="Pu L.-L."/>
            <person name="Puazo M."/>
            <person name="Quiles M.M."/>
            <person name="Quiroz J.B."/>
            <person name="Rabata D."/>
            <person name="Reeves K."/>
            <person name="Ruiz S.J."/>
            <person name="Shao H."/>
            <person name="Sisson I."/>
            <person name="Sonaike T."/>
            <person name="Sorelle R.P."/>
            <person name="Sutton A.E."/>
            <person name="Svatek A.F."/>
            <person name="Svetz L.A."/>
            <person name="Tamerisa K.S."/>
            <person name="Taylor T.R."/>
            <person name="Teague B."/>
            <person name="Thomas N."/>
            <person name="Thorn R.D."/>
            <person name="Trejos Z.Y."/>
            <person name="Trevino B.K."/>
            <person name="Ukegbu O.N."/>
            <person name="Urban J.B."/>
            <person name="Vasquez L.I."/>
            <person name="Vera V.A."/>
            <person name="Villasana D.M."/>
            <person name="Wang L."/>
            <person name="Ward-Moore S."/>
            <person name="Warren J.T."/>
            <person name="Wei X."/>
            <person name="White F."/>
            <person name="Williamson A.L."/>
            <person name="Wleczyk R."/>
            <person name="Wooden H.S."/>
            <person name="Wooden S.H."/>
            <person name="Yen J."/>
            <person name="Yoon L."/>
            <person name="Yoon V."/>
            <person name="Zorrilla S.E."/>
            <person name="Nelson D."/>
            <person name="Kucherlapati R."/>
            <person name="Weinstock G."/>
            <person name="Gibbs R.A."/>
        </authorList>
    </citation>
    <scope>NUCLEOTIDE SEQUENCE [LARGE SCALE GENOMIC DNA]</scope>
</reference>
<reference key="3">
    <citation type="journal article" date="2004" name="Genome Res.">
        <title>The status, quality, and expansion of the NIH full-length cDNA project: the Mammalian Gene Collection (MGC).</title>
        <authorList>
            <consortium name="The MGC Project Team"/>
        </authorList>
    </citation>
    <scope>NUCLEOTIDE SEQUENCE [LARGE SCALE MRNA]</scope>
    <scope>VARIANTS GLN-41; VAL-134; LYS-175; LEU-249; ARG-295; LYS-406 AND LYS-652</scope>
    <source>
        <tissue>Brain</tissue>
        <tissue>Urinary bladder</tissue>
    </source>
</reference>
<reference key="4">
    <citation type="journal article" date="2007" name="BMC Genomics">
        <title>The full-ORF clone resource of the German cDNA consortium.</title>
        <authorList>
            <person name="Bechtel S."/>
            <person name="Rosenfelder H."/>
            <person name="Duda A."/>
            <person name="Schmidt C.P."/>
            <person name="Ernst U."/>
            <person name="Wellenreuther R."/>
            <person name="Mehrle A."/>
            <person name="Schuster C."/>
            <person name="Bahr A."/>
            <person name="Bloecker H."/>
            <person name="Heubner D."/>
            <person name="Hoerlein A."/>
            <person name="Michel G."/>
            <person name="Wedler H."/>
            <person name="Koehrer K."/>
            <person name="Ottenwaelder B."/>
            <person name="Poustka A."/>
            <person name="Wiemann S."/>
            <person name="Schupp I."/>
        </authorList>
    </citation>
    <scope>NUCLEOTIDE SEQUENCE [LARGE SCALE MRNA] OF 400-666</scope>
    <source>
        <tissue>Retina</tissue>
    </source>
</reference>
<reference key="5">
    <citation type="journal article" date="2006" name="Cell">
        <title>Global, in vivo, and site-specific phosphorylation dynamics in signaling networks.</title>
        <authorList>
            <person name="Olsen J.V."/>
            <person name="Blagoev B."/>
            <person name="Gnad F."/>
            <person name="Macek B."/>
            <person name="Kumar C."/>
            <person name="Mortensen P."/>
            <person name="Mann M."/>
        </authorList>
    </citation>
    <scope>PHOSPHORYLATION [LARGE SCALE ANALYSIS] AT SER-83</scope>
    <scope>IDENTIFICATION BY MASS SPECTROMETRY [LARGE SCALE ANALYSIS]</scope>
    <source>
        <tissue>Cervix carcinoma</tissue>
    </source>
</reference>
<reference key="6">
    <citation type="journal article" date="2008" name="Mol. Cell">
        <title>Kinase-selective enrichment enables quantitative phosphoproteomics of the kinome across the cell cycle.</title>
        <authorList>
            <person name="Daub H."/>
            <person name="Olsen J.V."/>
            <person name="Bairlein M."/>
            <person name="Gnad F."/>
            <person name="Oppermann F.S."/>
            <person name="Korner R."/>
            <person name="Greff Z."/>
            <person name="Keri G."/>
            <person name="Stemmann O."/>
            <person name="Mann M."/>
        </authorList>
    </citation>
    <scope>PHOSPHORYLATION [LARGE SCALE ANALYSIS] AT SER-83</scope>
    <scope>IDENTIFICATION BY MASS SPECTROMETRY [LARGE SCALE ANALYSIS]</scope>
    <source>
        <tissue>Cervix carcinoma</tissue>
    </source>
</reference>
<reference key="7">
    <citation type="journal article" date="2008" name="Proc. Natl. Acad. Sci. U.S.A.">
        <title>A quantitative atlas of mitotic phosphorylation.</title>
        <authorList>
            <person name="Dephoure N."/>
            <person name="Zhou C."/>
            <person name="Villen J."/>
            <person name="Beausoleil S.A."/>
            <person name="Bakalarski C.E."/>
            <person name="Elledge S.J."/>
            <person name="Gygi S.P."/>
        </authorList>
    </citation>
    <scope>PHOSPHORYLATION [LARGE SCALE ANALYSIS] AT SER-103</scope>
    <scope>IDENTIFICATION BY MASS SPECTROMETRY [LARGE SCALE ANALYSIS]</scope>
    <source>
        <tissue>Cervix carcinoma</tissue>
    </source>
</reference>
<reference key="8">
    <citation type="journal article" date="2009" name="Anal. Chem.">
        <title>Lys-N and trypsin cover complementary parts of the phosphoproteome in a refined SCX-based approach.</title>
        <authorList>
            <person name="Gauci S."/>
            <person name="Helbig A.O."/>
            <person name="Slijper M."/>
            <person name="Krijgsveld J."/>
            <person name="Heck A.J."/>
            <person name="Mohammed S."/>
        </authorList>
    </citation>
    <scope>IDENTIFICATION BY MASS SPECTROMETRY [LARGE SCALE ANALYSIS]</scope>
</reference>
<reference key="9">
    <citation type="journal article" date="2009" name="Sci. Signal.">
        <title>Quantitative phosphoproteomic analysis of T cell receptor signaling reveals system-wide modulation of protein-protein interactions.</title>
        <authorList>
            <person name="Mayya V."/>
            <person name="Lundgren D.H."/>
            <person name="Hwang S.-I."/>
            <person name="Rezaul K."/>
            <person name="Wu L."/>
            <person name="Eng J.K."/>
            <person name="Rodionov V."/>
            <person name="Han D.K."/>
        </authorList>
    </citation>
    <scope>PHOSPHORYLATION [LARGE SCALE ANALYSIS] AT SER-83</scope>
    <scope>IDENTIFICATION BY MASS SPECTROMETRY [LARGE SCALE ANALYSIS]</scope>
    <source>
        <tissue>Leukemic T-cell</tissue>
    </source>
</reference>
<reference key="10">
    <citation type="journal article" date="2010" name="Sci. Signal.">
        <title>Quantitative phosphoproteomics reveals widespread full phosphorylation site occupancy during mitosis.</title>
        <authorList>
            <person name="Olsen J.V."/>
            <person name="Vermeulen M."/>
            <person name="Santamaria A."/>
            <person name="Kumar C."/>
            <person name="Miller M.L."/>
            <person name="Jensen L.J."/>
            <person name="Gnad F."/>
            <person name="Cox J."/>
            <person name="Jensen T.S."/>
            <person name="Nigg E.A."/>
            <person name="Brunak S."/>
            <person name="Mann M."/>
        </authorList>
    </citation>
    <scope>PHOSPHORYLATION [LARGE SCALE ANALYSIS] AT SER-83</scope>
    <scope>IDENTIFICATION BY MASS SPECTROMETRY [LARGE SCALE ANALYSIS]</scope>
    <source>
        <tissue>Cervix carcinoma</tissue>
    </source>
</reference>
<reference key="11">
    <citation type="journal article" date="2011" name="Sci. Signal.">
        <title>System-wide temporal characterization of the proteome and phosphoproteome of human embryonic stem cell differentiation.</title>
        <authorList>
            <person name="Rigbolt K.T."/>
            <person name="Prokhorova T.A."/>
            <person name="Akimov V."/>
            <person name="Henningsen J."/>
            <person name="Johansen P.T."/>
            <person name="Kratchmarova I."/>
            <person name="Kassem M."/>
            <person name="Mann M."/>
            <person name="Olsen J.V."/>
            <person name="Blagoev B."/>
        </authorList>
    </citation>
    <scope>PHOSPHORYLATION [LARGE SCALE ANALYSIS] AT SER-83</scope>
    <scope>IDENTIFICATION BY MASS SPECTROMETRY [LARGE SCALE ANALYSIS]</scope>
</reference>
<reference key="12">
    <citation type="journal article" date="2012" name="Mol. Cell. Proteomics">
        <title>Comparative large-scale characterisation of plant vs. mammal proteins reveals similar and idiosyncratic N-alpha acetylation features.</title>
        <authorList>
            <person name="Bienvenut W.V."/>
            <person name="Sumpton D."/>
            <person name="Martinez A."/>
            <person name="Lilla S."/>
            <person name="Espagne C."/>
            <person name="Meinnel T."/>
            <person name="Giglione C."/>
        </authorList>
    </citation>
    <scope>ACETYLATION [LARGE SCALE ANALYSIS] AT ALA-2</scope>
    <scope>CLEAVAGE OF INITIATOR METHIONINE [LARGE SCALE ANALYSIS]</scope>
    <scope>IDENTIFICATION BY MASS SPECTROMETRY [LARGE SCALE ANALYSIS]</scope>
</reference>
<reference key="13">
    <citation type="journal article" date="2013" name="J. Proteome Res.">
        <title>Toward a comprehensive characterization of a human cancer cell phosphoproteome.</title>
        <authorList>
            <person name="Zhou H."/>
            <person name="Di Palma S."/>
            <person name="Preisinger C."/>
            <person name="Peng M."/>
            <person name="Polat A.N."/>
            <person name="Heck A.J."/>
            <person name="Mohammed S."/>
        </authorList>
    </citation>
    <scope>PHOSPHORYLATION [LARGE SCALE ANALYSIS] AT SER-83</scope>
    <scope>IDENTIFICATION BY MASS SPECTROMETRY [LARGE SCALE ANALYSIS]</scope>
    <source>
        <tissue>Cervix carcinoma</tissue>
        <tissue>Erythroleukemia</tissue>
    </source>
</reference>
<reference key="14">
    <citation type="journal article" date="2014" name="J. Proteomics">
        <title>An enzyme assisted RP-RPLC approach for in-depth analysis of human liver phosphoproteome.</title>
        <authorList>
            <person name="Bian Y."/>
            <person name="Song C."/>
            <person name="Cheng K."/>
            <person name="Dong M."/>
            <person name="Wang F."/>
            <person name="Huang J."/>
            <person name="Sun D."/>
            <person name="Wang L."/>
            <person name="Ye M."/>
            <person name="Zou H."/>
        </authorList>
    </citation>
    <scope>PHOSPHORYLATION [LARGE SCALE ANALYSIS] AT SER-83</scope>
    <scope>IDENTIFICATION BY MASS SPECTROMETRY [LARGE SCALE ANALYSIS]</scope>
    <source>
        <tissue>Liver</tissue>
    </source>
</reference>
<evidence type="ECO:0000250" key="1"/>
<evidence type="ECO:0000255" key="2">
    <source>
        <dbReference type="PROSITE-ProRule" id="PRU00541"/>
    </source>
</evidence>
<evidence type="ECO:0000255" key="3">
    <source>
        <dbReference type="PROSITE-ProRule" id="PRU00542"/>
    </source>
</evidence>
<evidence type="ECO:0000256" key="4">
    <source>
        <dbReference type="SAM" id="MobiDB-lite"/>
    </source>
</evidence>
<evidence type="ECO:0000269" key="5">
    <source>
    </source>
</evidence>
<evidence type="ECO:0000269" key="6">
    <source>
    </source>
</evidence>
<evidence type="ECO:0000305" key="7"/>
<evidence type="ECO:0007744" key="8">
    <source>
    </source>
</evidence>
<evidence type="ECO:0007744" key="9">
    <source>
    </source>
</evidence>
<evidence type="ECO:0007744" key="10">
    <source>
    </source>
</evidence>
<evidence type="ECO:0007744" key="11">
    <source>
    </source>
</evidence>
<evidence type="ECO:0007744" key="12">
    <source>
    </source>
</evidence>
<evidence type="ECO:0007744" key="13">
    <source>
    </source>
</evidence>
<evidence type="ECO:0007744" key="14">
    <source>
    </source>
</evidence>
<evidence type="ECO:0007744" key="15">
    <source>
    </source>
</evidence>
<evidence type="ECO:0007744" key="16">
    <source>
    </source>
</evidence>
<comment type="function">
    <text evidence="1">ATP-binding RNA helicase involved in the biogenesis of 60S ribosomal subunits.</text>
</comment>
<comment type="catalytic activity">
    <reaction>
        <text>ATP + H2O = ADP + phosphate + H(+)</text>
        <dbReference type="Rhea" id="RHEA:13065"/>
        <dbReference type="ChEBI" id="CHEBI:15377"/>
        <dbReference type="ChEBI" id="CHEBI:15378"/>
        <dbReference type="ChEBI" id="CHEBI:30616"/>
        <dbReference type="ChEBI" id="CHEBI:43474"/>
        <dbReference type="ChEBI" id="CHEBI:456216"/>
        <dbReference type="EC" id="3.6.4.13"/>
    </reaction>
</comment>
<comment type="subcellular location">
    <subcellularLocation>
        <location evidence="1">Nucleus</location>
        <location evidence="1">Nucleolus</location>
    </subcellularLocation>
</comment>
<comment type="domain">
    <text>The Q motif is unique to and characteristic of the DEAD box family of RNA helicases and controls ATP binding and hydrolysis.</text>
</comment>
<comment type="similarity">
    <text evidence="7">Belongs to the DEAD box helicase family. DDX51/DBP6 subfamily.</text>
</comment>
<accession>Q8N8A6</accession>
<accession>A8MPT9</accession>
<accession>Q5CZ71</accession>
<accession>Q8IXK5</accession>
<accession>Q96ED1</accession>
<protein>
    <recommendedName>
        <fullName>ATP-dependent RNA helicase DDX51</fullName>
        <ecNumber>3.6.4.13</ecNumber>
    </recommendedName>
    <alternativeName>
        <fullName>DEAD box protein 51</fullName>
    </alternativeName>
</protein>
<organism>
    <name type="scientific">Homo sapiens</name>
    <name type="common">Human</name>
    <dbReference type="NCBI Taxonomy" id="9606"/>
    <lineage>
        <taxon>Eukaryota</taxon>
        <taxon>Metazoa</taxon>
        <taxon>Chordata</taxon>
        <taxon>Craniata</taxon>
        <taxon>Vertebrata</taxon>
        <taxon>Euteleostomi</taxon>
        <taxon>Mammalia</taxon>
        <taxon>Eutheria</taxon>
        <taxon>Euarchontoglires</taxon>
        <taxon>Primates</taxon>
        <taxon>Haplorrhini</taxon>
        <taxon>Catarrhini</taxon>
        <taxon>Hominidae</taxon>
        <taxon>Homo</taxon>
    </lineage>
</organism>